<reference key="1">
    <citation type="journal article" date="2015" name="Genome Biol. Evol.">
        <title>Molecular diversity and gene evolution of the venom arsenal of Terebridae predatory marine snails.</title>
        <authorList>
            <person name="Gorson J."/>
            <person name="Ramrattan G."/>
            <person name="Verdes A."/>
            <person name="Wright E.M."/>
            <person name="Kantor Y."/>
            <person name="Rajaram Srinivasan R."/>
            <person name="Musunuri R."/>
            <person name="Packer D."/>
            <person name="Albano G."/>
            <person name="Qiu W.G."/>
            <person name="Holford M."/>
        </authorList>
    </citation>
    <scope>NUCLEOTIDE SEQUENCE [MRNA]</scope>
    <source>
        <tissue>Venom duct</tissue>
    </source>
</reference>
<evidence type="ECO:0000255" key="1"/>
<evidence type="ECO:0000303" key="2">
    <source>
    </source>
</evidence>
<evidence type="ECO:0000305" key="3"/>
<evidence type="ECO:0000305" key="4">
    <source>
    </source>
</evidence>
<proteinExistence type="inferred from homology"/>
<accession>P0DN46</accession>
<feature type="signal peptide" evidence="1">
    <location>
        <begin position="1"/>
        <end position="21"/>
    </location>
</feature>
<feature type="propeptide" id="PRO_0000435057" evidence="3">
    <location>
        <begin position="22"/>
        <end position="38"/>
    </location>
</feature>
<feature type="peptide" id="PRO_0000435058" description="Teretoxin Tan1.1">
    <location>
        <begin position="39"/>
        <end position="62"/>
    </location>
</feature>
<protein>
    <recommendedName>
        <fullName evidence="2">Teretoxin Tan1.1</fullName>
    </recommendedName>
</protein>
<keyword id="KW-0165">Cleavage on pair of basic residues</keyword>
<keyword id="KW-1015">Disulfide bond</keyword>
<keyword id="KW-0964">Secreted</keyword>
<keyword id="KW-0732">Signal</keyword>
<keyword id="KW-0800">Toxin</keyword>
<comment type="subcellular location">
    <subcellularLocation>
        <location evidence="4">Secreted</location>
    </subcellularLocation>
</comment>
<comment type="tissue specificity">
    <text evidence="4">Expressed by the venom duct.</text>
</comment>
<comment type="domain">
    <text evidence="3">The cysteine framework is I (CC-C-C). Alpha4/5 pattern.</text>
</comment>
<comment type="PTM">
    <text evidence="3">Contains 2 disulfide bonds.</text>
</comment>
<comment type="similarity">
    <text>Belongs to the teretoxin A (TA) superfamily.</text>
</comment>
<dbReference type="SMR" id="P0DN46"/>
<dbReference type="GO" id="GO:0005576">
    <property type="term" value="C:extracellular region"/>
    <property type="evidence" value="ECO:0007669"/>
    <property type="project" value="UniProtKB-SubCell"/>
</dbReference>
<dbReference type="GO" id="GO:0090729">
    <property type="term" value="F:toxin activity"/>
    <property type="evidence" value="ECO:0007669"/>
    <property type="project" value="UniProtKB-KW"/>
</dbReference>
<organism>
    <name type="scientific">Terebra anilis</name>
    <name type="common">Auger snail</name>
    <name type="synonym">Cinguloterebra anilis</name>
    <dbReference type="NCBI Taxonomy" id="553697"/>
    <lineage>
        <taxon>Eukaryota</taxon>
        <taxon>Metazoa</taxon>
        <taxon>Spiralia</taxon>
        <taxon>Lophotrochozoa</taxon>
        <taxon>Mollusca</taxon>
        <taxon>Gastropoda</taxon>
        <taxon>Caenogastropoda</taxon>
        <taxon>Neogastropoda</taxon>
        <taxon>Conoidea</taxon>
        <taxon>Terebridae</taxon>
        <taxon>Terebra</taxon>
    </lineage>
</organism>
<name>T11_TERAN</name>
<sequence length="62" mass="6804">MSCFPVLFVMMLLVSQSVWAFPGPETRDGSVQDAESRRVRSAEEDCCENPVCKHTPGCPKGS</sequence>